<sequence length="102" mass="11166">MAKGQSLQDPFLNALRRERVPVSIYLVNGIKLQGQIESFDQFVILLKNTVSQMVYKHAISTVVPSRPVSHHSNNAGGGTSSNYHHGSSAQNTSAQQDSEETE</sequence>
<feature type="chain" id="PRO_1000025906" description="RNA-binding protein Hfq">
    <location>
        <begin position="1"/>
        <end position="102"/>
    </location>
</feature>
<feature type="domain" description="Sm" evidence="2">
    <location>
        <begin position="9"/>
        <end position="68"/>
    </location>
</feature>
<feature type="region of interest" description="Disordered" evidence="3">
    <location>
        <begin position="63"/>
        <end position="102"/>
    </location>
</feature>
<feature type="compositionally biased region" description="Polar residues" evidence="3">
    <location>
        <begin position="70"/>
        <end position="96"/>
    </location>
</feature>
<gene>
    <name evidence="1" type="primary">hfq</name>
    <name type="ordered locus">Ecok1_42240</name>
    <name type="ORF">APECO1_2219</name>
</gene>
<name>HFQ_ECOK1</name>
<organism>
    <name type="scientific">Escherichia coli O1:K1 / APEC</name>
    <dbReference type="NCBI Taxonomy" id="405955"/>
    <lineage>
        <taxon>Bacteria</taxon>
        <taxon>Pseudomonadati</taxon>
        <taxon>Pseudomonadota</taxon>
        <taxon>Gammaproteobacteria</taxon>
        <taxon>Enterobacterales</taxon>
        <taxon>Enterobacteriaceae</taxon>
        <taxon>Escherichia</taxon>
    </lineage>
</organism>
<evidence type="ECO:0000255" key="1">
    <source>
        <dbReference type="HAMAP-Rule" id="MF_00436"/>
    </source>
</evidence>
<evidence type="ECO:0000255" key="2">
    <source>
        <dbReference type="PROSITE-ProRule" id="PRU01346"/>
    </source>
</evidence>
<evidence type="ECO:0000256" key="3">
    <source>
        <dbReference type="SAM" id="MobiDB-lite"/>
    </source>
</evidence>
<proteinExistence type="inferred from homology"/>
<protein>
    <recommendedName>
        <fullName evidence="1">RNA-binding protein Hfq</fullName>
    </recommendedName>
</protein>
<comment type="function">
    <text evidence="1">RNA chaperone that binds small regulatory RNA (sRNAs) and mRNAs to facilitate mRNA translational regulation in response to envelope stress, environmental stress and changes in metabolite concentrations. Also binds with high specificity to tRNAs.</text>
</comment>
<comment type="subunit">
    <text evidence="1">Homohexamer.</text>
</comment>
<comment type="similarity">
    <text evidence="1">Belongs to the Hfq family.</text>
</comment>
<reference key="1">
    <citation type="journal article" date="2007" name="J. Bacteriol.">
        <title>The genome sequence of avian pathogenic Escherichia coli strain O1:K1:H7 shares strong similarities with human extraintestinal pathogenic E. coli genomes.</title>
        <authorList>
            <person name="Johnson T.J."/>
            <person name="Kariyawasam S."/>
            <person name="Wannemuehler Y."/>
            <person name="Mangiamele P."/>
            <person name="Johnson S.J."/>
            <person name="Doetkott C."/>
            <person name="Skyberg J.A."/>
            <person name="Lynne A.M."/>
            <person name="Johnson J.R."/>
            <person name="Nolan L.K."/>
        </authorList>
    </citation>
    <scope>NUCLEOTIDE SEQUENCE [LARGE SCALE GENOMIC DNA]</scope>
</reference>
<keyword id="KW-1185">Reference proteome</keyword>
<keyword id="KW-0694">RNA-binding</keyword>
<keyword id="KW-0346">Stress response</keyword>
<accession>A1AJ78</accession>
<dbReference type="EMBL" id="CP000468">
    <property type="protein sequence ID" value="ABJ03718.1"/>
    <property type="molecule type" value="Genomic_DNA"/>
</dbReference>
<dbReference type="RefSeq" id="WP_001051883.1">
    <property type="nucleotide sequence ID" value="NZ_CADILS010000035.1"/>
</dbReference>
<dbReference type="EMDB" id="EMD-12884"/>
<dbReference type="SMR" id="A1AJ78"/>
<dbReference type="GeneID" id="93777649"/>
<dbReference type="KEGG" id="ecv:APECO1_2219"/>
<dbReference type="HOGENOM" id="CLU_113688_2_1_6"/>
<dbReference type="Proteomes" id="UP000008216">
    <property type="component" value="Chromosome"/>
</dbReference>
<dbReference type="GO" id="GO:0005829">
    <property type="term" value="C:cytosol"/>
    <property type="evidence" value="ECO:0007669"/>
    <property type="project" value="TreeGrafter"/>
</dbReference>
<dbReference type="GO" id="GO:0003723">
    <property type="term" value="F:RNA binding"/>
    <property type="evidence" value="ECO:0007669"/>
    <property type="project" value="UniProtKB-UniRule"/>
</dbReference>
<dbReference type="GO" id="GO:0006355">
    <property type="term" value="P:regulation of DNA-templated transcription"/>
    <property type="evidence" value="ECO:0007669"/>
    <property type="project" value="InterPro"/>
</dbReference>
<dbReference type="GO" id="GO:0043487">
    <property type="term" value="P:regulation of RNA stability"/>
    <property type="evidence" value="ECO:0007669"/>
    <property type="project" value="TreeGrafter"/>
</dbReference>
<dbReference type="GO" id="GO:0045974">
    <property type="term" value="P:regulation of translation, ncRNA-mediated"/>
    <property type="evidence" value="ECO:0007669"/>
    <property type="project" value="TreeGrafter"/>
</dbReference>
<dbReference type="CDD" id="cd01716">
    <property type="entry name" value="Hfq"/>
    <property type="match status" value="1"/>
</dbReference>
<dbReference type="FunFam" id="2.30.30.100:FF:000001">
    <property type="entry name" value="RNA-binding protein Hfq"/>
    <property type="match status" value="1"/>
</dbReference>
<dbReference type="Gene3D" id="2.30.30.100">
    <property type="match status" value="1"/>
</dbReference>
<dbReference type="HAMAP" id="MF_00436">
    <property type="entry name" value="Hfq"/>
    <property type="match status" value="1"/>
</dbReference>
<dbReference type="InterPro" id="IPR005001">
    <property type="entry name" value="Hfq"/>
</dbReference>
<dbReference type="InterPro" id="IPR010920">
    <property type="entry name" value="LSM_dom_sf"/>
</dbReference>
<dbReference type="InterPro" id="IPR047575">
    <property type="entry name" value="Sm"/>
</dbReference>
<dbReference type="NCBIfam" id="TIGR02383">
    <property type="entry name" value="Hfq"/>
    <property type="match status" value="1"/>
</dbReference>
<dbReference type="NCBIfam" id="NF001602">
    <property type="entry name" value="PRK00395.1"/>
    <property type="match status" value="1"/>
</dbReference>
<dbReference type="PANTHER" id="PTHR34772">
    <property type="entry name" value="RNA-BINDING PROTEIN HFQ"/>
    <property type="match status" value="1"/>
</dbReference>
<dbReference type="PANTHER" id="PTHR34772:SF1">
    <property type="entry name" value="RNA-BINDING PROTEIN HFQ"/>
    <property type="match status" value="1"/>
</dbReference>
<dbReference type="Pfam" id="PF17209">
    <property type="entry name" value="Hfq"/>
    <property type="match status" value="1"/>
</dbReference>
<dbReference type="SUPFAM" id="SSF50182">
    <property type="entry name" value="Sm-like ribonucleoproteins"/>
    <property type="match status" value="1"/>
</dbReference>
<dbReference type="PROSITE" id="PS52002">
    <property type="entry name" value="SM"/>
    <property type="match status" value="1"/>
</dbReference>